<reference key="1">
    <citation type="journal article" date="2002" name="Proc. Natl. Acad. Sci. U.S.A.">
        <title>The complete genome sequence of Chlorobium tepidum TLS, a photosynthetic, anaerobic, green-sulfur bacterium.</title>
        <authorList>
            <person name="Eisen J.A."/>
            <person name="Nelson K.E."/>
            <person name="Paulsen I.T."/>
            <person name="Heidelberg J.F."/>
            <person name="Wu M."/>
            <person name="Dodson R.J."/>
            <person name="DeBoy R.T."/>
            <person name="Gwinn M.L."/>
            <person name="Nelson W.C."/>
            <person name="Haft D.H."/>
            <person name="Hickey E.K."/>
            <person name="Peterson J.D."/>
            <person name="Durkin A.S."/>
            <person name="Kolonay J.F."/>
            <person name="Yang F."/>
            <person name="Holt I.E."/>
            <person name="Umayam L.A."/>
            <person name="Mason T.M."/>
            <person name="Brenner M."/>
            <person name="Shea T.P."/>
            <person name="Parksey D.S."/>
            <person name="Nierman W.C."/>
            <person name="Feldblyum T.V."/>
            <person name="Hansen C.L."/>
            <person name="Craven M.B."/>
            <person name="Radune D."/>
            <person name="Vamathevan J.J."/>
            <person name="Khouri H.M."/>
            <person name="White O."/>
            <person name="Gruber T.M."/>
            <person name="Ketchum K.A."/>
            <person name="Venter J.C."/>
            <person name="Tettelin H."/>
            <person name="Bryant D.A."/>
            <person name="Fraser C.M."/>
        </authorList>
    </citation>
    <scope>NUCLEOTIDE SEQUENCE [LARGE SCALE GENOMIC DNA]</scope>
    <source>
        <strain>ATCC 49652 / DSM 12025 / NBRC 103806 / TLS</strain>
    </source>
</reference>
<proteinExistence type="inferred from homology"/>
<name>IF3_CHLTE</name>
<gene>
    <name evidence="1" type="primary">infC</name>
    <name type="ordered locus">CT2127</name>
</gene>
<dbReference type="EMBL" id="AE006470">
    <property type="protein sequence ID" value="AAM73343.1"/>
    <property type="molecule type" value="Genomic_DNA"/>
</dbReference>
<dbReference type="RefSeq" id="NP_663001.1">
    <property type="nucleotide sequence ID" value="NC_002932.3"/>
</dbReference>
<dbReference type="RefSeq" id="WP_010933781.1">
    <property type="nucleotide sequence ID" value="NC_002932.3"/>
</dbReference>
<dbReference type="SMR" id="Q8KAM9"/>
<dbReference type="STRING" id="194439.CT2127"/>
<dbReference type="EnsemblBacteria" id="AAM73343">
    <property type="protein sequence ID" value="AAM73343"/>
    <property type="gene ID" value="CT2127"/>
</dbReference>
<dbReference type="KEGG" id="cte:CT2127"/>
<dbReference type="PATRIC" id="fig|194439.7.peg.1928"/>
<dbReference type="eggNOG" id="COG0290">
    <property type="taxonomic scope" value="Bacteria"/>
</dbReference>
<dbReference type="HOGENOM" id="CLU_054919_3_0_10"/>
<dbReference type="OrthoDB" id="9806014at2"/>
<dbReference type="Proteomes" id="UP000001007">
    <property type="component" value="Chromosome"/>
</dbReference>
<dbReference type="GO" id="GO:0005737">
    <property type="term" value="C:cytoplasm"/>
    <property type="evidence" value="ECO:0007669"/>
    <property type="project" value="UniProtKB-SubCell"/>
</dbReference>
<dbReference type="GO" id="GO:0043022">
    <property type="term" value="F:ribosome binding"/>
    <property type="evidence" value="ECO:0007669"/>
    <property type="project" value="TreeGrafter"/>
</dbReference>
<dbReference type="GO" id="GO:0003743">
    <property type="term" value="F:translation initiation factor activity"/>
    <property type="evidence" value="ECO:0007669"/>
    <property type="project" value="UniProtKB-UniRule"/>
</dbReference>
<dbReference type="GO" id="GO:0032790">
    <property type="term" value="P:ribosome disassembly"/>
    <property type="evidence" value="ECO:0007669"/>
    <property type="project" value="TreeGrafter"/>
</dbReference>
<dbReference type="Gene3D" id="3.30.110.10">
    <property type="entry name" value="Translation initiation factor 3 (IF-3), C-terminal domain"/>
    <property type="match status" value="1"/>
</dbReference>
<dbReference type="Gene3D" id="3.10.20.80">
    <property type="entry name" value="Translation initiation factor 3 (IF-3), N-terminal domain"/>
    <property type="match status" value="1"/>
</dbReference>
<dbReference type="HAMAP" id="MF_00080">
    <property type="entry name" value="IF_3"/>
    <property type="match status" value="1"/>
</dbReference>
<dbReference type="InterPro" id="IPR036788">
    <property type="entry name" value="T_IF-3_C_sf"/>
</dbReference>
<dbReference type="InterPro" id="IPR036787">
    <property type="entry name" value="T_IF-3_N_sf"/>
</dbReference>
<dbReference type="InterPro" id="IPR001288">
    <property type="entry name" value="Translation_initiation_fac_3"/>
</dbReference>
<dbReference type="InterPro" id="IPR019815">
    <property type="entry name" value="Translation_initiation_fac_3_C"/>
</dbReference>
<dbReference type="InterPro" id="IPR019814">
    <property type="entry name" value="Translation_initiation_fac_3_N"/>
</dbReference>
<dbReference type="NCBIfam" id="TIGR00168">
    <property type="entry name" value="infC"/>
    <property type="match status" value="1"/>
</dbReference>
<dbReference type="PANTHER" id="PTHR10938">
    <property type="entry name" value="TRANSLATION INITIATION FACTOR IF-3"/>
    <property type="match status" value="1"/>
</dbReference>
<dbReference type="PANTHER" id="PTHR10938:SF0">
    <property type="entry name" value="TRANSLATION INITIATION FACTOR IF-3, MITOCHONDRIAL"/>
    <property type="match status" value="1"/>
</dbReference>
<dbReference type="Pfam" id="PF00707">
    <property type="entry name" value="IF3_C"/>
    <property type="match status" value="1"/>
</dbReference>
<dbReference type="Pfam" id="PF05198">
    <property type="entry name" value="IF3_N"/>
    <property type="match status" value="1"/>
</dbReference>
<dbReference type="SUPFAM" id="SSF55200">
    <property type="entry name" value="Translation initiation factor IF3, C-terminal domain"/>
    <property type="match status" value="1"/>
</dbReference>
<dbReference type="SUPFAM" id="SSF54364">
    <property type="entry name" value="Translation initiation factor IF3, N-terminal domain"/>
    <property type="match status" value="1"/>
</dbReference>
<evidence type="ECO:0000255" key="1">
    <source>
        <dbReference type="HAMAP-Rule" id="MF_00080"/>
    </source>
</evidence>
<evidence type="ECO:0000256" key="2">
    <source>
        <dbReference type="SAM" id="MobiDB-lite"/>
    </source>
</evidence>
<keyword id="KW-0963">Cytoplasm</keyword>
<keyword id="KW-0396">Initiation factor</keyword>
<keyword id="KW-0648">Protein biosynthesis</keyword>
<keyword id="KW-1185">Reference proteome</keyword>
<sequence length="213" mass="24811">MKKQKTSGNQKPKVSYRINEQIRVPEVRVVFPEGGMQVMKTQDARRMAEERGIDLIEVQPNAQPPVCKLENYGKLIYKMDKKDKDLKKKQKTTSLKELRFHPNTDKHDFDFKTAHLEEFLRKGNRVRATIVFLGRSIIYKDKGFELADRLTERLSTVANRDGEPKFEGKKLFVYFEPDKKKIEQFEKQRAMAEKIASLPPLPPDNSGEPEDDE</sequence>
<protein>
    <recommendedName>
        <fullName evidence="1">Translation initiation factor IF-3</fullName>
    </recommendedName>
</protein>
<feature type="chain" id="PRO_0000177505" description="Translation initiation factor IF-3">
    <location>
        <begin position="1"/>
        <end position="213"/>
    </location>
</feature>
<feature type="region of interest" description="Disordered" evidence="2">
    <location>
        <begin position="193"/>
        <end position="213"/>
    </location>
</feature>
<accession>Q8KAM9</accession>
<comment type="function">
    <text evidence="1">IF-3 binds to the 30S ribosomal subunit and shifts the equilibrium between 70S ribosomes and their 50S and 30S subunits in favor of the free subunits, thus enhancing the availability of 30S subunits on which protein synthesis initiation begins.</text>
</comment>
<comment type="subunit">
    <text evidence="1">Monomer.</text>
</comment>
<comment type="subcellular location">
    <subcellularLocation>
        <location evidence="1">Cytoplasm</location>
    </subcellularLocation>
</comment>
<comment type="similarity">
    <text evidence="1">Belongs to the IF-3 family.</text>
</comment>
<organism>
    <name type="scientific">Chlorobaculum tepidum (strain ATCC 49652 / DSM 12025 / NBRC 103806 / TLS)</name>
    <name type="common">Chlorobium tepidum</name>
    <dbReference type="NCBI Taxonomy" id="194439"/>
    <lineage>
        <taxon>Bacteria</taxon>
        <taxon>Pseudomonadati</taxon>
        <taxon>Chlorobiota</taxon>
        <taxon>Chlorobiia</taxon>
        <taxon>Chlorobiales</taxon>
        <taxon>Chlorobiaceae</taxon>
        <taxon>Chlorobaculum</taxon>
    </lineage>
</organism>